<protein>
    <recommendedName>
        <fullName evidence="1">Putative pre-16S rRNA nuclease</fullName>
        <ecNumber evidence="1">3.1.-.-</ecNumber>
    </recommendedName>
</protein>
<name>YQGF_GLUDA</name>
<sequence>MPLFNMHQIRGQLGRDQRLLGLDPGQKTIGLALSDVSLMLASPYGALRRGKLSVVAAEIRRIAAREGVGGLVSGLPLSMDGSFGPAAQAARDWMISLSEQVGLPAAMWDERLSSSAVNRMLIQDADMTRQRRAELVDKLAASYMLQGALDATAE</sequence>
<keyword id="KW-0963">Cytoplasm</keyword>
<keyword id="KW-0378">Hydrolase</keyword>
<keyword id="KW-0540">Nuclease</keyword>
<keyword id="KW-1185">Reference proteome</keyword>
<keyword id="KW-0690">Ribosome biogenesis</keyword>
<comment type="function">
    <text evidence="1">Could be a nuclease involved in processing of the 5'-end of pre-16S rRNA.</text>
</comment>
<comment type="subcellular location">
    <subcellularLocation>
        <location evidence="1">Cytoplasm</location>
    </subcellularLocation>
</comment>
<comment type="similarity">
    <text evidence="1">Belongs to the YqgF nuclease family.</text>
</comment>
<feature type="chain" id="PRO_1000082746" description="Putative pre-16S rRNA nuclease">
    <location>
        <begin position="1"/>
        <end position="154"/>
    </location>
</feature>
<gene>
    <name type="ordered locus">GDI2980</name>
    <name type="ordered locus">Gdia_3370</name>
</gene>
<dbReference type="EC" id="3.1.-.-" evidence="1"/>
<dbReference type="EMBL" id="AM889285">
    <property type="protein sequence ID" value="CAP56923.1"/>
    <property type="molecule type" value="Genomic_DNA"/>
</dbReference>
<dbReference type="EMBL" id="CP001189">
    <property type="protein sequence ID" value="ACI53096.1"/>
    <property type="molecule type" value="Genomic_DNA"/>
</dbReference>
<dbReference type="RefSeq" id="WP_012227231.1">
    <property type="nucleotide sequence ID" value="NC_010125.1"/>
</dbReference>
<dbReference type="SMR" id="A9HRJ3"/>
<dbReference type="STRING" id="272568.GDI2980"/>
<dbReference type="KEGG" id="gdi:GDI2980"/>
<dbReference type="KEGG" id="gdj:Gdia_3370"/>
<dbReference type="eggNOG" id="COG0816">
    <property type="taxonomic scope" value="Bacteria"/>
</dbReference>
<dbReference type="HOGENOM" id="CLU_098240_1_1_5"/>
<dbReference type="OrthoDB" id="9796140at2"/>
<dbReference type="Proteomes" id="UP000001176">
    <property type="component" value="Chromosome"/>
</dbReference>
<dbReference type="GO" id="GO:0005829">
    <property type="term" value="C:cytosol"/>
    <property type="evidence" value="ECO:0007669"/>
    <property type="project" value="TreeGrafter"/>
</dbReference>
<dbReference type="GO" id="GO:0004518">
    <property type="term" value="F:nuclease activity"/>
    <property type="evidence" value="ECO:0007669"/>
    <property type="project" value="UniProtKB-KW"/>
</dbReference>
<dbReference type="GO" id="GO:0000967">
    <property type="term" value="P:rRNA 5'-end processing"/>
    <property type="evidence" value="ECO:0007669"/>
    <property type="project" value="UniProtKB-UniRule"/>
</dbReference>
<dbReference type="CDD" id="cd16964">
    <property type="entry name" value="YqgF"/>
    <property type="match status" value="1"/>
</dbReference>
<dbReference type="Gene3D" id="3.30.420.140">
    <property type="entry name" value="YqgF/RNase H-like domain"/>
    <property type="match status" value="1"/>
</dbReference>
<dbReference type="HAMAP" id="MF_00651">
    <property type="entry name" value="Nuclease_YqgF"/>
    <property type="match status" value="1"/>
</dbReference>
<dbReference type="InterPro" id="IPR012337">
    <property type="entry name" value="RNaseH-like_sf"/>
</dbReference>
<dbReference type="InterPro" id="IPR005227">
    <property type="entry name" value="YqgF"/>
</dbReference>
<dbReference type="InterPro" id="IPR006641">
    <property type="entry name" value="YqgF/RNaseH-like_dom"/>
</dbReference>
<dbReference type="InterPro" id="IPR037027">
    <property type="entry name" value="YqgF/RNaseH-like_dom_sf"/>
</dbReference>
<dbReference type="NCBIfam" id="TIGR00250">
    <property type="entry name" value="RNAse_H_YqgF"/>
    <property type="match status" value="1"/>
</dbReference>
<dbReference type="PANTHER" id="PTHR33317">
    <property type="entry name" value="POLYNUCLEOTIDYL TRANSFERASE, RIBONUCLEASE H-LIKE SUPERFAMILY PROTEIN"/>
    <property type="match status" value="1"/>
</dbReference>
<dbReference type="PANTHER" id="PTHR33317:SF4">
    <property type="entry name" value="POLYNUCLEOTIDYL TRANSFERASE, RIBONUCLEASE H-LIKE SUPERFAMILY PROTEIN"/>
    <property type="match status" value="1"/>
</dbReference>
<dbReference type="Pfam" id="PF03652">
    <property type="entry name" value="RuvX"/>
    <property type="match status" value="1"/>
</dbReference>
<dbReference type="SMART" id="SM00732">
    <property type="entry name" value="YqgFc"/>
    <property type="match status" value="1"/>
</dbReference>
<dbReference type="SUPFAM" id="SSF53098">
    <property type="entry name" value="Ribonuclease H-like"/>
    <property type="match status" value="1"/>
</dbReference>
<reference key="1">
    <citation type="journal article" date="2009" name="BMC Genomics">
        <title>Complete genome sequence of the sugarcane nitrogen-fixing endophyte Gluconacetobacter diazotrophicus Pal5.</title>
        <authorList>
            <person name="Bertalan M."/>
            <person name="Albano R."/>
            <person name="de Padua V."/>
            <person name="Rouws L."/>
            <person name="Rojas C."/>
            <person name="Hemerly A."/>
            <person name="Teixeira K."/>
            <person name="Schwab S."/>
            <person name="Araujo J."/>
            <person name="Oliveira A."/>
            <person name="Franca L."/>
            <person name="Magalhaes V."/>
            <person name="Alqueres S."/>
            <person name="Cardoso A."/>
            <person name="Almeida W."/>
            <person name="Loureiro M.M."/>
            <person name="Nogueira E."/>
            <person name="Cidade D."/>
            <person name="Oliveira D."/>
            <person name="Simao T."/>
            <person name="Macedo J."/>
            <person name="Valadao A."/>
            <person name="Dreschsel M."/>
            <person name="Freitas F."/>
            <person name="Vidal M."/>
            <person name="Guedes H."/>
            <person name="Rodrigues E."/>
            <person name="Meneses C."/>
            <person name="Brioso P."/>
            <person name="Pozzer L."/>
            <person name="Figueiredo D."/>
            <person name="Montano H."/>
            <person name="Junior J."/>
            <person name="de Souza Filho G."/>
            <person name="Martin Quintana Flores V."/>
            <person name="Ferreira B."/>
            <person name="Branco A."/>
            <person name="Gonzalez P."/>
            <person name="Guillobel H."/>
            <person name="Lemos M."/>
            <person name="Seibel L."/>
            <person name="Macedo J."/>
            <person name="Alves-Ferreira M."/>
            <person name="Sachetto-Martins G."/>
            <person name="Coelho A."/>
            <person name="Santos E."/>
            <person name="Amaral G."/>
            <person name="Neves A."/>
            <person name="Pacheco A.B."/>
            <person name="Carvalho D."/>
            <person name="Lery L."/>
            <person name="Bisch P."/>
            <person name="Rossle S.C."/>
            <person name="Urmenyi T."/>
            <person name="Rael Pereira A."/>
            <person name="Silva R."/>
            <person name="Rondinelli E."/>
            <person name="von Kruger W."/>
            <person name="Martins O."/>
            <person name="Baldani J.I."/>
            <person name="Ferreira P.C."/>
        </authorList>
    </citation>
    <scope>NUCLEOTIDE SEQUENCE [LARGE SCALE GENOMIC DNA]</scope>
    <source>
        <strain>ATCC 49037 / DSM 5601 / CCUG 37298 / CIP 103539 / LMG 7603 / PAl5</strain>
    </source>
</reference>
<reference key="2">
    <citation type="journal article" date="2010" name="Stand. Genomic Sci.">
        <title>Two genome sequences of the same bacterial strain, Gluconacetobacter diazotrophicus PAl 5, suggest a new standard in genome sequence submission.</title>
        <authorList>
            <person name="Giongo A."/>
            <person name="Tyler H.L."/>
            <person name="Zipperer U.N."/>
            <person name="Triplett E.W."/>
        </authorList>
    </citation>
    <scope>NUCLEOTIDE SEQUENCE [LARGE SCALE GENOMIC DNA]</scope>
    <source>
        <strain>ATCC 49037 / DSM 5601 / CCUG 37298 / CIP 103539 / LMG 7603 / PAl5</strain>
    </source>
</reference>
<organism>
    <name type="scientific">Gluconacetobacter diazotrophicus (strain ATCC 49037 / DSM 5601 / CCUG 37298 / CIP 103539 / LMG 7603 / PAl5)</name>
    <dbReference type="NCBI Taxonomy" id="272568"/>
    <lineage>
        <taxon>Bacteria</taxon>
        <taxon>Pseudomonadati</taxon>
        <taxon>Pseudomonadota</taxon>
        <taxon>Alphaproteobacteria</taxon>
        <taxon>Acetobacterales</taxon>
        <taxon>Acetobacteraceae</taxon>
        <taxon>Gluconacetobacter</taxon>
    </lineage>
</organism>
<accession>A9HRJ3</accession>
<accession>B5ZLF4</accession>
<proteinExistence type="inferred from homology"/>
<evidence type="ECO:0000255" key="1">
    <source>
        <dbReference type="HAMAP-Rule" id="MF_00651"/>
    </source>
</evidence>